<accession>B7H3X2</accession>
<reference key="1">
    <citation type="journal article" date="2008" name="J. Bacteriol.">
        <title>Comparative genome sequence analysis of multidrug-resistant Acinetobacter baumannii.</title>
        <authorList>
            <person name="Adams M.D."/>
            <person name="Goglin K."/>
            <person name="Molyneaux N."/>
            <person name="Hujer K.M."/>
            <person name="Lavender H."/>
            <person name="Jamison J.J."/>
            <person name="MacDonald I.J."/>
            <person name="Martin K.M."/>
            <person name="Russo T."/>
            <person name="Campagnari A.A."/>
            <person name="Hujer A.M."/>
            <person name="Bonomo R.A."/>
            <person name="Gill S.R."/>
        </authorList>
    </citation>
    <scope>NUCLEOTIDE SEQUENCE [LARGE SCALE GENOMIC DNA]</scope>
    <source>
        <strain>AB307-0294</strain>
    </source>
</reference>
<proteinExistence type="inferred from homology"/>
<comment type="catalytic activity">
    <reaction evidence="1">
        <text>L-methionyl-[protein] + [thioredoxin]-disulfide + H2O = L-methionyl-(R)-S-oxide-[protein] + [thioredoxin]-dithiol</text>
        <dbReference type="Rhea" id="RHEA:24164"/>
        <dbReference type="Rhea" id="RHEA-COMP:10698"/>
        <dbReference type="Rhea" id="RHEA-COMP:10700"/>
        <dbReference type="Rhea" id="RHEA-COMP:12313"/>
        <dbReference type="Rhea" id="RHEA-COMP:12314"/>
        <dbReference type="ChEBI" id="CHEBI:15377"/>
        <dbReference type="ChEBI" id="CHEBI:16044"/>
        <dbReference type="ChEBI" id="CHEBI:29950"/>
        <dbReference type="ChEBI" id="CHEBI:45764"/>
        <dbReference type="ChEBI" id="CHEBI:50058"/>
        <dbReference type="EC" id="1.8.4.12"/>
    </reaction>
</comment>
<comment type="cofactor">
    <cofactor evidence="1">
        <name>Zn(2+)</name>
        <dbReference type="ChEBI" id="CHEBI:29105"/>
    </cofactor>
    <text evidence="1">Binds 1 zinc ion per subunit. The zinc ion is important for the structural integrity of the protein.</text>
</comment>
<comment type="similarity">
    <text evidence="1">Belongs to the MsrB Met sulfoxide reductase family.</text>
</comment>
<feature type="chain" id="PRO_1000145343" description="Peptide methionine sulfoxide reductase MsrB">
    <location>
        <begin position="1"/>
        <end position="139"/>
    </location>
</feature>
<feature type="domain" description="MsrB" evidence="2">
    <location>
        <begin position="8"/>
        <end position="130"/>
    </location>
</feature>
<feature type="active site" description="Nucleophile" evidence="2">
    <location>
        <position position="119"/>
    </location>
</feature>
<feature type="binding site" evidence="2">
    <location>
        <position position="47"/>
    </location>
    <ligand>
        <name>Zn(2+)</name>
        <dbReference type="ChEBI" id="CHEBI:29105"/>
    </ligand>
</feature>
<feature type="binding site" evidence="2">
    <location>
        <position position="50"/>
    </location>
    <ligand>
        <name>Zn(2+)</name>
        <dbReference type="ChEBI" id="CHEBI:29105"/>
    </ligand>
</feature>
<feature type="binding site" evidence="2">
    <location>
        <position position="96"/>
    </location>
    <ligand>
        <name>Zn(2+)</name>
        <dbReference type="ChEBI" id="CHEBI:29105"/>
    </ligand>
</feature>
<feature type="binding site" evidence="2">
    <location>
        <position position="99"/>
    </location>
    <ligand>
        <name>Zn(2+)</name>
        <dbReference type="ChEBI" id="CHEBI:29105"/>
    </ligand>
</feature>
<name>MSRB_ACIB3</name>
<organism>
    <name type="scientific">Acinetobacter baumannii (strain AB307-0294)</name>
    <dbReference type="NCBI Taxonomy" id="557600"/>
    <lineage>
        <taxon>Bacteria</taxon>
        <taxon>Pseudomonadati</taxon>
        <taxon>Pseudomonadota</taxon>
        <taxon>Gammaproteobacteria</taxon>
        <taxon>Moraxellales</taxon>
        <taxon>Moraxellaceae</taxon>
        <taxon>Acinetobacter</taxon>
        <taxon>Acinetobacter calcoaceticus/baumannii complex</taxon>
    </lineage>
</organism>
<gene>
    <name evidence="1" type="primary">msrB</name>
    <name type="ordered locus">ABBFA_002018</name>
</gene>
<sequence length="139" mass="15909">MGKVNKTDREWQRELSPEEYRITRQKGTEPAFTGQYWNTKQHGTYVCRCCGAELFSSDAKYDSGCGWPSFFRPLNGSVIDEHEDLTHGMVRTEIVCHDCEAHLGHVFEDGPQPTGLRYCVNSASLQLKTQEKNDEETYP</sequence>
<dbReference type="EC" id="1.8.4.12" evidence="1"/>
<dbReference type="EMBL" id="CP001172">
    <property type="protein sequence ID" value="ACJ59166.1"/>
    <property type="molecule type" value="Genomic_DNA"/>
</dbReference>
<dbReference type="RefSeq" id="WP_000521160.1">
    <property type="nucleotide sequence ID" value="NZ_CP001172.1"/>
</dbReference>
<dbReference type="SMR" id="B7H3X2"/>
<dbReference type="GeneID" id="92893679"/>
<dbReference type="HOGENOM" id="CLU_031040_8_5_6"/>
<dbReference type="Proteomes" id="UP000006924">
    <property type="component" value="Chromosome"/>
</dbReference>
<dbReference type="GO" id="GO:0005737">
    <property type="term" value="C:cytoplasm"/>
    <property type="evidence" value="ECO:0007669"/>
    <property type="project" value="TreeGrafter"/>
</dbReference>
<dbReference type="GO" id="GO:0033743">
    <property type="term" value="F:peptide-methionine (R)-S-oxide reductase activity"/>
    <property type="evidence" value="ECO:0007669"/>
    <property type="project" value="UniProtKB-UniRule"/>
</dbReference>
<dbReference type="GO" id="GO:0008270">
    <property type="term" value="F:zinc ion binding"/>
    <property type="evidence" value="ECO:0007669"/>
    <property type="project" value="UniProtKB-UniRule"/>
</dbReference>
<dbReference type="GO" id="GO:0030091">
    <property type="term" value="P:protein repair"/>
    <property type="evidence" value="ECO:0007669"/>
    <property type="project" value="InterPro"/>
</dbReference>
<dbReference type="GO" id="GO:0006979">
    <property type="term" value="P:response to oxidative stress"/>
    <property type="evidence" value="ECO:0007669"/>
    <property type="project" value="InterPro"/>
</dbReference>
<dbReference type="FunFam" id="2.170.150.20:FF:000001">
    <property type="entry name" value="Peptide methionine sulfoxide reductase MsrB"/>
    <property type="match status" value="1"/>
</dbReference>
<dbReference type="Gene3D" id="2.170.150.20">
    <property type="entry name" value="Peptide methionine sulfoxide reductase"/>
    <property type="match status" value="1"/>
</dbReference>
<dbReference type="HAMAP" id="MF_01400">
    <property type="entry name" value="MsrB"/>
    <property type="match status" value="1"/>
</dbReference>
<dbReference type="InterPro" id="IPR028427">
    <property type="entry name" value="Met_Sox_Rdtase_MsrB"/>
</dbReference>
<dbReference type="InterPro" id="IPR002579">
    <property type="entry name" value="Met_Sox_Rdtase_MsrB_dom"/>
</dbReference>
<dbReference type="InterPro" id="IPR011057">
    <property type="entry name" value="Mss4-like_sf"/>
</dbReference>
<dbReference type="NCBIfam" id="TIGR00357">
    <property type="entry name" value="peptide-methionine (R)-S-oxide reductase MsrB"/>
    <property type="match status" value="1"/>
</dbReference>
<dbReference type="PANTHER" id="PTHR10173">
    <property type="entry name" value="METHIONINE SULFOXIDE REDUCTASE"/>
    <property type="match status" value="1"/>
</dbReference>
<dbReference type="PANTHER" id="PTHR10173:SF52">
    <property type="entry name" value="METHIONINE-R-SULFOXIDE REDUCTASE B1"/>
    <property type="match status" value="1"/>
</dbReference>
<dbReference type="Pfam" id="PF01641">
    <property type="entry name" value="SelR"/>
    <property type="match status" value="1"/>
</dbReference>
<dbReference type="SUPFAM" id="SSF51316">
    <property type="entry name" value="Mss4-like"/>
    <property type="match status" value="1"/>
</dbReference>
<dbReference type="PROSITE" id="PS51790">
    <property type="entry name" value="MSRB"/>
    <property type="match status" value="1"/>
</dbReference>
<keyword id="KW-0479">Metal-binding</keyword>
<keyword id="KW-0560">Oxidoreductase</keyword>
<keyword id="KW-0862">Zinc</keyword>
<protein>
    <recommendedName>
        <fullName evidence="1">Peptide methionine sulfoxide reductase MsrB</fullName>
        <ecNumber evidence="1">1.8.4.12</ecNumber>
    </recommendedName>
    <alternativeName>
        <fullName evidence="1">Peptide-methionine (R)-S-oxide reductase</fullName>
    </alternativeName>
</protein>
<evidence type="ECO:0000255" key="1">
    <source>
        <dbReference type="HAMAP-Rule" id="MF_01400"/>
    </source>
</evidence>
<evidence type="ECO:0000255" key="2">
    <source>
        <dbReference type="PROSITE-ProRule" id="PRU01126"/>
    </source>
</evidence>